<sequence length="208" mass="22533">MKIVEVKHPLVKHKLGLMRENDISTKRFRELASEVGSLLTYEATADLETEKVTIEGWNGPVEIDQIKGKKITVVPILRAGLGMMEGVLENVPSARISVVGMYRNEETLEPVPYFQKLVSNIDERMALIVDPMLATGGSVIATIDLLKKAGCSSIKVLVLVAAPEGIAALEKAHPDVELYTASIDQGLNEHGYIIPGLGDAGDKIFGTK</sequence>
<protein>
    <recommendedName>
        <fullName evidence="1">Uracil phosphoribosyltransferase</fullName>
        <ecNumber evidence="1">2.4.2.9</ecNumber>
    </recommendedName>
    <alternativeName>
        <fullName evidence="1">UMP pyrophosphorylase</fullName>
    </alternativeName>
    <alternativeName>
        <fullName evidence="1">UPRTase</fullName>
    </alternativeName>
</protein>
<comment type="function">
    <text evidence="1">Catalyzes the conversion of uracil and 5-phospho-alpha-D-ribose 1-diphosphate (PRPP) to UMP and diphosphate.</text>
</comment>
<comment type="catalytic activity">
    <reaction evidence="1">
        <text>UMP + diphosphate = 5-phospho-alpha-D-ribose 1-diphosphate + uracil</text>
        <dbReference type="Rhea" id="RHEA:13017"/>
        <dbReference type="ChEBI" id="CHEBI:17568"/>
        <dbReference type="ChEBI" id="CHEBI:33019"/>
        <dbReference type="ChEBI" id="CHEBI:57865"/>
        <dbReference type="ChEBI" id="CHEBI:58017"/>
        <dbReference type="EC" id="2.4.2.9"/>
    </reaction>
</comment>
<comment type="cofactor">
    <cofactor evidence="1">
        <name>Mg(2+)</name>
        <dbReference type="ChEBI" id="CHEBI:18420"/>
    </cofactor>
    <text evidence="1">Binds 1 Mg(2+) ion per subunit. The magnesium is bound as Mg-PRPP.</text>
</comment>
<comment type="activity regulation">
    <text evidence="1">Allosterically activated by GTP.</text>
</comment>
<comment type="pathway">
    <text evidence="1">Pyrimidine metabolism; UMP biosynthesis via salvage pathway; UMP from uracil: step 1/1.</text>
</comment>
<comment type="similarity">
    <text evidence="1">Belongs to the UPRTase family.</text>
</comment>
<evidence type="ECO:0000255" key="1">
    <source>
        <dbReference type="HAMAP-Rule" id="MF_01218"/>
    </source>
</evidence>
<accession>B4T0M7</accession>
<organism>
    <name type="scientific">Salmonella newport (strain SL254)</name>
    <dbReference type="NCBI Taxonomy" id="423368"/>
    <lineage>
        <taxon>Bacteria</taxon>
        <taxon>Pseudomonadati</taxon>
        <taxon>Pseudomonadota</taxon>
        <taxon>Gammaproteobacteria</taxon>
        <taxon>Enterobacterales</taxon>
        <taxon>Enterobacteriaceae</taxon>
        <taxon>Salmonella</taxon>
    </lineage>
</organism>
<name>UPP_SALNS</name>
<keyword id="KW-0021">Allosteric enzyme</keyword>
<keyword id="KW-0328">Glycosyltransferase</keyword>
<keyword id="KW-0342">GTP-binding</keyword>
<keyword id="KW-0460">Magnesium</keyword>
<keyword id="KW-0547">Nucleotide-binding</keyword>
<keyword id="KW-0808">Transferase</keyword>
<gene>
    <name evidence="1" type="primary">upp</name>
    <name type="ordered locus">SNSL254_A2693</name>
</gene>
<feature type="chain" id="PRO_1000139159" description="Uracil phosphoribosyltransferase">
    <location>
        <begin position="1"/>
        <end position="208"/>
    </location>
</feature>
<feature type="binding site" evidence="1">
    <location>
        <position position="78"/>
    </location>
    <ligand>
        <name>5-phospho-alpha-D-ribose 1-diphosphate</name>
        <dbReference type="ChEBI" id="CHEBI:58017"/>
    </ligand>
</feature>
<feature type="binding site" evidence="1">
    <location>
        <position position="103"/>
    </location>
    <ligand>
        <name>5-phospho-alpha-D-ribose 1-diphosphate</name>
        <dbReference type="ChEBI" id="CHEBI:58017"/>
    </ligand>
</feature>
<feature type="binding site" evidence="1">
    <location>
        <begin position="130"/>
        <end position="138"/>
    </location>
    <ligand>
        <name>5-phospho-alpha-D-ribose 1-diphosphate</name>
        <dbReference type="ChEBI" id="CHEBI:58017"/>
    </ligand>
</feature>
<feature type="binding site" evidence="1">
    <location>
        <position position="193"/>
    </location>
    <ligand>
        <name>uracil</name>
        <dbReference type="ChEBI" id="CHEBI:17568"/>
    </ligand>
</feature>
<feature type="binding site" evidence="1">
    <location>
        <begin position="198"/>
        <end position="200"/>
    </location>
    <ligand>
        <name>uracil</name>
        <dbReference type="ChEBI" id="CHEBI:17568"/>
    </ligand>
</feature>
<feature type="binding site" evidence="1">
    <location>
        <position position="199"/>
    </location>
    <ligand>
        <name>5-phospho-alpha-D-ribose 1-diphosphate</name>
        <dbReference type="ChEBI" id="CHEBI:58017"/>
    </ligand>
</feature>
<dbReference type="EC" id="2.4.2.9" evidence="1"/>
<dbReference type="EMBL" id="CP001113">
    <property type="protein sequence ID" value="ACF65669.1"/>
    <property type="molecule type" value="Genomic_DNA"/>
</dbReference>
<dbReference type="RefSeq" id="WP_000706208.1">
    <property type="nucleotide sequence ID" value="NZ_CCMR01000001.1"/>
</dbReference>
<dbReference type="SMR" id="B4T0M7"/>
<dbReference type="KEGG" id="see:SNSL254_A2693"/>
<dbReference type="HOGENOM" id="CLU_067096_2_2_6"/>
<dbReference type="UniPathway" id="UPA00574">
    <property type="reaction ID" value="UER00636"/>
</dbReference>
<dbReference type="Proteomes" id="UP000008824">
    <property type="component" value="Chromosome"/>
</dbReference>
<dbReference type="GO" id="GO:0005525">
    <property type="term" value="F:GTP binding"/>
    <property type="evidence" value="ECO:0007669"/>
    <property type="project" value="UniProtKB-KW"/>
</dbReference>
<dbReference type="GO" id="GO:0000287">
    <property type="term" value="F:magnesium ion binding"/>
    <property type="evidence" value="ECO:0007669"/>
    <property type="project" value="UniProtKB-UniRule"/>
</dbReference>
<dbReference type="GO" id="GO:0004845">
    <property type="term" value="F:uracil phosphoribosyltransferase activity"/>
    <property type="evidence" value="ECO:0007669"/>
    <property type="project" value="UniProtKB-UniRule"/>
</dbReference>
<dbReference type="GO" id="GO:0044206">
    <property type="term" value="P:UMP salvage"/>
    <property type="evidence" value="ECO:0007669"/>
    <property type="project" value="UniProtKB-UniRule"/>
</dbReference>
<dbReference type="GO" id="GO:0006223">
    <property type="term" value="P:uracil salvage"/>
    <property type="evidence" value="ECO:0007669"/>
    <property type="project" value="InterPro"/>
</dbReference>
<dbReference type="CDD" id="cd06223">
    <property type="entry name" value="PRTases_typeI"/>
    <property type="match status" value="1"/>
</dbReference>
<dbReference type="FunFam" id="3.40.50.2020:FF:000003">
    <property type="entry name" value="Uracil phosphoribosyltransferase"/>
    <property type="match status" value="1"/>
</dbReference>
<dbReference type="Gene3D" id="3.40.50.2020">
    <property type="match status" value="1"/>
</dbReference>
<dbReference type="HAMAP" id="MF_01218_B">
    <property type="entry name" value="Upp_B"/>
    <property type="match status" value="1"/>
</dbReference>
<dbReference type="InterPro" id="IPR000836">
    <property type="entry name" value="PRibTrfase_dom"/>
</dbReference>
<dbReference type="InterPro" id="IPR029057">
    <property type="entry name" value="PRTase-like"/>
</dbReference>
<dbReference type="InterPro" id="IPR034332">
    <property type="entry name" value="Upp_B"/>
</dbReference>
<dbReference type="InterPro" id="IPR050054">
    <property type="entry name" value="UPRTase/APRTase"/>
</dbReference>
<dbReference type="InterPro" id="IPR005765">
    <property type="entry name" value="Ura_phspho_trans"/>
</dbReference>
<dbReference type="NCBIfam" id="NF001097">
    <property type="entry name" value="PRK00129.1"/>
    <property type="match status" value="1"/>
</dbReference>
<dbReference type="NCBIfam" id="TIGR01091">
    <property type="entry name" value="upp"/>
    <property type="match status" value="1"/>
</dbReference>
<dbReference type="PANTHER" id="PTHR32315">
    <property type="entry name" value="ADENINE PHOSPHORIBOSYLTRANSFERASE"/>
    <property type="match status" value="1"/>
</dbReference>
<dbReference type="PANTHER" id="PTHR32315:SF4">
    <property type="entry name" value="URACIL PHOSPHORIBOSYLTRANSFERASE, CHLOROPLASTIC"/>
    <property type="match status" value="1"/>
</dbReference>
<dbReference type="Pfam" id="PF14681">
    <property type="entry name" value="UPRTase"/>
    <property type="match status" value="1"/>
</dbReference>
<dbReference type="SUPFAM" id="SSF53271">
    <property type="entry name" value="PRTase-like"/>
    <property type="match status" value="1"/>
</dbReference>
<reference key="1">
    <citation type="journal article" date="2011" name="J. Bacteriol.">
        <title>Comparative genomics of 28 Salmonella enterica isolates: evidence for CRISPR-mediated adaptive sublineage evolution.</title>
        <authorList>
            <person name="Fricke W.F."/>
            <person name="Mammel M.K."/>
            <person name="McDermott P.F."/>
            <person name="Tartera C."/>
            <person name="White D.G."/>
            <person name="Leclerc J.E."/>
            <person name="Ravel J."/>
            <person name="Cebula T.A."/>
        </authorList>
    </citation>
    <scope>NUCLEOTIDE SEQUENCE [LARGE SCALE GENOMIC DNA]</scope>
    <source>
        <strain>SL254</strain>
    </source>
</reference>
<proteinExistence type="inferred from homology"/>